<feature type="chain" id="PRO_0000008515" description="Endogenous retrovirus group K member 18 Env polyprotein">
    <location>
        <begin position="1"/>
        <end position="560"/>
    </location>
</feature>
<feature type="chain" id="PRO_0000008516" description="Surface protein" evidence="1">
    <location>
        <begin position="1"/>
        <end position="354"/>
    </location>
</feature>
<feature type="chain" id="PRO_0000008517" description="Transmembrane protein" evidence="1">
    <location>
        <begin position="355"/>
        <end position="560"/>
    </location>
</feature>
<feature type="transmembrane region" description="Helical" evidence="2">
    <location>
        <begin position="522"/>
        <end position="542"/>
    </location>
</feature>
<feature type="region of interest" description="Fusion peptide" evidence="2">
    <location>
        <begin position="355"/>
        <end position="375"/>
    </location>
</feature>
<feature type="site" description="Cleavage" evidence="1">
    <location>
        <begin position="354"/>
        <end position="355"/>
    </location>
</feature>
<feature type="sequence variant" id="VAR_018642" description="In allele HERV-K18.1 and allele HERV-K18.3." evidence="3 4 5 9">
    <original>C</original>
    <variation>Y</variation>
    <location>
        <position position="97"/>
    </location>
</feature>
<feature type="sequence variant" id="VAR_018643" description="In allele HERV-K18.1." evidence="3 8 9">
    <location>
        <begin position="155"/>
        <end position="560"/>
    </location>
</feature>
<feature type="sequence variant" id="VAR_018644" description="In allele HERV-K18.3." evidence="5">
    <original>V</original>
    <variation>I</variation>
    <location>
        <position position="272"/>
    </location>
</feature>
<feature type="sequence variant" id="VAR_018645" description="In allele HERV-K18.3." evidence="5">
    <original>V</original>
    <variation>I</variation>
    <location>
        <position position="348"/>
    </location>
</feature>
<feature type="sequence variant" id="VAR_018646" description="In allele HERV-K18.3." evidence="5">
    <original>V</original>
    <variation>I</variation>
    <location>
        <position position="534"/>
    </location>
</feature>
<organism>
    <name type="scientific">Homo sapiens</name>
    <name type="common">Human</name>
    <dbReference type="NCBI Taxonomy" id="9606"/>
    <lineage>
        <taxon>Eukaryota</taxon>
        <taxon>Metazoa</taxon>
        <taxon>Chordata</taxon>
        <taxon>Craniata</taxon>
        <taxon>Vertebrata</taxon>
        <taxon>Euteleostomi</taxon>
        <taxon>Mammalia</taxon>
        <taxon>Eutheria</taxon>
        <taxon>Euarchontoglires</taxon>
        <taxon>Primates</taxon>
        <taxon>Haplorrhini</taxon>
        <taxon>Catarrhini</taxon>
        <taxon>Hominidae</taxon>
        <taxon>Homo</taxon>
    </lineage>
</organism>
<reference key="1">
    <citation type="journal article" date="1999" name="J. Virol.">
        <title>Genome wide screening, cloning, chromosomal assignment and expression of full-length human endogenous retrovirus type K (HERV-K).</title>
        <authorList>
            <person name="Toenjes R.R."/>
            <person name="Czauderna F."/>
            <person name="Kurth R."/>
        </authorList>
    </citation>
    <scope>NUCLEOTIDE SEQUENCE [GENOMIC DNA] (ALLELE HERV-K18.2)</scope>
</reference>
<reference key="2">
    <citation type="journal article" date="2001" name="Immunity">
        <title>Interferon-alpha induced endogenous superantigen: a model linking environment and autoimmunity.</title>
        <authorList>
            <person name="Stauffer Y."/>
            <person name="Marguerat S."/>
            <person name="Meylan F."/>
            <person name="Ucla C."/>
            <person name="Sutkowski N."/>
            <person name="Huber B.T."/>
            <person name="Pelet T."/>
            <person name="Conrad B."/>
        </authorList>
    </citation>
    <scope>NUCLEOTIDE SEQUENCE (ALLELE HERV-K18.3)</scope>
    <scope>INDUCTION</scope>
    <scope>CHARACTERIZATION</scope>
</reference>
<reference key="3">
    <citation type="journal article" date="1997" name="Cell">
        <title>A human endogenous retroviral superantigen as candidate autoimmune gene in type I diabetes.</title>
        <authorList>
            <person name="Conrad B."/>
            <person name="Weissmahr R.N."/>
            <person name="Boeni J."/>
            <person name="Arcari R."/>
            <person name="Schuepbach J."/>
            <person name="Mach B."/>
        </authorList>
    </citation>
    <scope>NUCLEOTIDE SEQUENCE (ALLELE HERV-K18.1)</scope>
</reference>
<reference key="4">
    <citation type="journal article" date="1998" name="Cell">
        <title>HERV-K10s and immune-mediated (type 1) diabetes.</title>
        <authorList>
            <person name="Lan M.S."/>
            <person name="Mason A."/>
            <person name="Coutant R."/>
            <person name="Chen Q.-Y."/>
            <person name="Vargas A."/>
            <person name="Rao J."/>
            <person name="Gomez R."/>
            <person name="Chalew S."/>
            <person name="Garry R."/>
            <person name="Maclaren N.K."/>
        </authorList>
    </citation>
    <scope>NUCLEOTIDE SEQUENCE [GENOMIC DNA] (ALLELE HERV-K18.1)</scope>
</reference>
<reference key="5">
    <citation type="journal article" date="1999" name="J. Hum. Genet.">
        <title>Isolation and localization of an IDDMK1,2-22-related human endogenous retroviral gene, and identification of a CA repeat marker at its locus.</title>
        <authorList>
            <person name="Hasuike S."/>
            <person name="Miura K."/>
            <person name="Miyoshi O."/>
            <person name="Miyamoto T."/>
            <person name="Niikawa N."/>
            <person name="Jinno Y."/>
            <person name="Ishikawa M."/>
        </authorList>
    </citation>
    <scope>NUCLEOTIDE SEQUENCE (ALLELE HERV-K18.1)</scope>
</reference>
<reference key="6">
    <citation type="journal article" date="2001" name="Immunity">
        <title>Epstein-Barr virus transactivates the human endogenous retrovirus HERV-K18 that encodes a superantigen.</title>
        <authorList>
            <person name="Sutkowski N."/>
            <person name="Conrad B."/>
            <person name="Thorley-Lawson D.A."/>
            <person name="Huber B.T."/>
        </authorList>
    </citation>
    <scope>CHARACTERIZATION</scope>
</reference>
<reference key="7">
    <citation type="journal article" date="2002" name="Clin. Exp. Immunol.">
        <title>Autoantibodies to human endogenous retrovirus-K are frequently detected in health and disease and react with multiple epitopes.</title>
        <authorList>
            <person name="Herve C.A."/>
            <person name="Lugli E.B."/>
            <person name="Brand A."/>
            <person name="Griffiths D.J."/>
            <person name="Venables P.J.W."/>
        </authorList>
    </citation>
    <scope>CHARACTERIZATION</scope>
</reference>
<reference key="8">
    <citation type="journal article" date="2002" name="Immunol. Lett.">
        <title>Human endogenous retrovirus IDDMK(1,2)22 and mouse mammary tumor virus superantigens differ in their ability to stimulate murine T cell hybridomas.</title>
        <authorList>
            <person name="Azar G.A."/>
            <person name="Thibodeau J."/>
        </authorList>
    </citation>
    <scope>CHARACTERIZATION</scope>
</reference>
<reference key="9">
    <citation type="journal article" date="2001" name="J. Hum. Genet.">
        <title>Identification of nonsynonymous polymorphisms in the superantigen-coding region of IDDMK1,2 22 and a pilot study on the association between IDDMK1,2 22 and type 1 diabetes.</title>
        <authorList>
            <person name="Kinjo Y."/>
            <person name="Matsuura N."/>
            <person name="Yokota Y."/>
            <person name="Ohtsu S."/>
            <person name="Nomoto K."/>
            <person name="Komiya I."/>
            <person name="Sugimoto J."/>
            <person name="Jinno Y."/>
            <person name="Takasu N."/>
        </authorList>
    </citation>
    <scope>POLYMORPHISM</scope>
</reference>
<reference key="10">
    <citation type="journal article" date="2004" name="Diabetes">
        <title>Association of human endogenous retrovirus K-18 polymorphisms with type 1 diabetes.</title>
        <authorList>
            <person name="Marguerat S."/>
            <person name="Wang W.Y.S."/>
            <person name="Todd J.A."/>
            <person name="Conrad B."/>
        </authorList>
    </citation>
    <scope>POLYMORPHISM</scope>
</reference>
<reference key="11">
    <citation type="journal article" date="2003" name="Oncogene">
        <title>Quantitation of HERV-K env gene expression and splicing in human breast cancer.</title>
        <authorList>
            <person name="Wang-Johanning F."/>
            <person name="Frost A.R."/>
            <person name="Jian B."/>
            <person name="Epp L."/>
            <person name="Lu D.W."/>
            <person name="Johanning G.L."/>
        </authorList>
    </citation>
    <scope>SUBGENOMIC RNA</scope>
</reference>
<comment type="function">
    <text>Retroviral envelope proteins mediate receptor recognition and membrane fusion during early infection. Endogenous envelope proteins may have kept, lost or modified their original function during evolution. This envelope protein has superantigenic properties.</text>
</comment>
<comment type="function">
    <text evidence="1">SU mediates receptor recognition.</text>
</comment>
<comment type="function">
    <text evidence="1">TM anchors the envelope heterodimer to the viral membrane through one transmembrane domain. The other hydrophobic domain, called fusion peptide, mediates fusion of the viral membrane with the target cell membrane (By similarity).</text>
</comment>
<comment type="subunit">
    <text evidence="1">The surface (SU) and transmembrane (TM) proteins form a heterodimer. SU and TM are attached by noncovalent interactions or by a labile interchain disulfide bond (By similarity).</text>
</comment>
<comment type="subcellular location">
    <molecule>Transmembrane protein</molecule>
    <subcellularLocation>
        <location evidence="1">Cell membrane</location>
        <topology evidence="1">Single-pass type I membrane protein</topology>
    </subcellularLocation>
</comment>
<comment type="subcellular location">
    <molecule>Surface protein</molecule>
    <subcellularLocation>
        <location evidence="1">Cell membrane</location>
        <topology evidence="1">Peripheral membrane protein</topology>
    </subcellularLocation>
    <text evidence="1">The surface protein is not anchored to the membrane, but localizes to the extracellular surface through its binding to TM.</text>
</comment>
<comment type="subcellular location">
    <molecule>Endogenous retrovirus group K member 18 Env polyprotein</molecule>
    <subcellularLocation>
        <location evidence="1">Virion</location>
    </subcellularLocation>
</comment>
<comment type="tissue specificity">
    <text>Expressed at higher level in the thymus. Expressed at lower level in peripheral blood lymphocytes.</text>
</comment>
<comment type="developmental stage">
    <text>High expression in thymocytes. Neither expressed nor inducible in mature T-cells. Inducible in CD2 negative peripheral blood lymphocytes.</text>
</comment>
<comment type="induction">
    <text evidence="5">Induced by type I interferons and by Epstein-Barr virus (EBV).</text>
</comment>
<comment type="PTM">
    <text evidence="1">Specific enzymatic cleavages in vivo yield the mature SU and TM proteins.</text>
</comment>
<comment type="polymorphism">
    <text evidence="10">This envelope gene is polymorphic with at least three different alleles (called HERV-K18.1, HERV-K18.2 and HERV-K18.3). A polymorphism introducing a premature stop codon in position 154 is present in allele HERV-K18.1 resulting in a truncated SU protein. The sequence shown is that of HERV-K18.2.</text>
</comment>
<comment type="polymorphism">
    <text evidence="5 6 7">Some positive evidence of genetic association found between allele HERV-K18.3 and type 1 diabetes.</text>
</comment>
<comment type="miscellaneous">
    <text>Orthologs in P.troglodytes and G.gorilla.</text>
</comment>
<comment type="miscellaneous">
    <text>Has a type 1 genome. The HERV-K(HML-2) family contains type 1 and type 2 genomes depending on the absence or presence of 292 nucleotides at the 5'-end of the env gene resulting in Env proteins of distinct sizes. Despite their overall retroviral envelope structure HERV-K(HML-2) type 1 envelope proteins lack a predictable signal sequence. Subgenomic RNA transcripts coding for full-length envelope proteins have been detected for both type of genomes.</text>
</comment>
<comment type="miscellaneous">
    <text>Autoantibodies reactive to this envelope are detectable in sera from healthy donors and individuals with autoimmune diseases.</text>
</comment>
<comment type="miscellaneous">
    <text>Intragenic, in the first intron of CD48 gene.</text>
</comment>
<comment type="similarity">
    <text evidence="10">Belongs to the beta type-B retroviral envelope protein family. HERV class-II K(HML-2) env subfamily.</text>
</comment>
<comment type="caution">
    <text evidence="10">No predictable signal peptide.</text>
</comment>
<dbReference type="EMBL" id="Y18890">
    <property type="protein sequence ID" value="CAB56604.1"/>
    <property type="molecule type" value="Genomic_DNA"/>
</dbReference>
<dbReference type="EMBL" id="AF012336">
    <property type="protein sequence ID" value="AAC58456.1"/>
    <property type="molecule type" value="Genomic_DNA"/>
</dbReference>
<dbReference type="EMBL" id="AF333069">
    <property type="protein sequence ID" value="AAL16777.1"/>
    <property type="molecule type" value="Genomic_DNA"/>
</dbReference>
<dbReference type="EMBL" id="AF333072">
    <property type="protein sequence ID" value="AAL60057.1"/>
    <property type="molecule type" value="Genomic_DNA"/>
</dbReference>
<dbReference type="EMBL" id="AF333073">
    <property type="protein sequence ID" value="AAL16780.1"/>
    <property type="molecule type" value="Genomic_DNA"/>
</dbReference>
<dbReference type="EMBL" id="AF012337">
    <property type="protein sequence ID" value="AAC58457.1"/>
    <property type="molecule type" value="Genomic_DNA"/>
</dbReference>
<dbReference type="EMBL" id="AF084864">
    <property type="protein sequence ID" value="AAC68893.1"/>
    <property type="molecule type" value="Genomic_DNA"/>
</dbReference>
<dbReference type="EMBL" id="AF134984">
    <property type="protein sequence ID" value="AAD33055.1"/>
    <property type="molecule type" value="Genomic_DNA"/>
</dbReference>
<dbReference type="IntAct" id="O42043">
    <property type="interactions" value="1"/>
</dbReference>
<dbReference type="iPTMnet" id="O42043"/>
<dbReference type="PhosphoSitePlus" id="O42043"/>
<dbReference type="BioMuta" id="HGNC:39025"/>
<dbReference type="jPOST" id="O42043"/>
<dbReference type="MassIVE" id="O42043"/>
<dbReference type="PeptideAtlas" id="O42043"/>
<dbReference type="GeneCards" id="ERVK-18"/>
<dbReference type="HGNC" id="HGNC:39025">
    <property type="gene designation" value="ERVK-18"/>
</dbReference>
<dbReference type="neXtProt" id="NX_O42043"/>
<dbReference type="PhylomeDB" id="O42043"/>
<dbReference type="Pharos" id="O42043">
    <property type="development level" value="Tdark"/>
</dbReference>
<dbReference type="Proteomes" id="UP000005640">
    <property type="component" value="Unplaced"/>
</dbReference>
<dbReference type="GO" id="GO:0005886">
    <property type="term" value="C:plasma membrane"/>
    <property type="evidence" value="ECO:0007669"/>
    <property type="project" value="UniProtKB-SubCell"/>
</dbReference>
<dbReference type="GO" id="GO:0005198">
    <property type="term" value="F:structural molecule activity"/>
    <property type="evidence" value="ECO:0007669"/>
    <property type="project" value="InterPro"/>
</dbReference>
<dbReference type="CDD" id="cd09909">
    <property type="entry name" value="HIV-1-like_HR1-HR2"/>
    <property type="match status" value="1"/>
</dbReference>
<dbReference type="InterPro" id="IPR000328">
    <property type="entry name" value="GP41-like"/>
</dbReference>
<dbReference type="InterPro" id="IPR029104">
    <property type="entry name" value="HERV-K_env"/>
</dbReference>
<dbReference type="InterPro" id="IPR051255">
    <property type="entry name" value="Retroviral_env_glycoprotein"/>
</dbReference>
<dbReference type="PANTHER" id="PTHR34313">
    <property type="entry name" value="ENDOGENOUS RETROVIRUS GROUP K MEMBER 113 ENV POLYPROTEIN-RELATED"/>
    <property type="match status" value="1"/>
</dbReference>
<dbReference type="PANTHER" id="PTHR34313:SF3">
    <property type="entry name" value="ENDOGENOUS RETROVIRUS GROUP K MEMBER 113 ENV POLYPROTEIN-RELATED"/>
    <property type="match status" value="1"/>
</dbReference>
<dbReference type="Pfam" id="PF00517">
    <property type="entry name" value="GP41"/>
    <property type="match status" value="1"/>
</dbReference>
<dbReference type="Pfam" id="PF13804">
    <property type="entry name" value="HERV-K_env_2"/>
    <property type="match status" value="1"/>
</dbReference>
<proteinExistence type="evidence at protein level"/>
<protein>
    <recommendedName>
        <fullName>Endogenous retrovirus group K member 18 Env polyprotein</fullName>
    </recommendedName>
    <alternativeName>
        <fullName>Envelope polyprotein</fullName>
    </alternativeName>
    <alternativeName>
        <fullName>HERV-K(C1a) envelope protein</fullName>
    </alternativeName>
    <alternativeName>
        <fullName>HERV-K110 envelope protein</fullName>
    </alternativeName>
    <alternativeName>
        <fullName>HERV-K18 envelope protein</fullName>
    </alternativeName>
    <alternativeName>
        <fullName>HERV-K18 superantigen</fullName>
    </alternativeName>
    <alternativeName>
        <fullName>HERV-K_1q23.3 provirus ancestral Env polyprotein</fullName>
    </alternativeName>
    <alternativeName>
        <fullName>IDDMK1,2 22 envelope protein</fullName>
    </alternativeName>
    <alternativeName>
        <fullName>IDDMK1,2 22 superantigen</fullName>
    </alternativeName>
    <component>
        <recommendedName>
            <fullName>Surface protein</fullName>
            <shortName>SU</shortName>
        </recommendedName>
    </component>
    <component>
        <recommendedName>
            <fullName>Transmembrane protein</fullName>
            <shortName>TM</shortName>
        </recommendedName>
    </component>
</protein>
<gene>
    <name type="primary">ERVK-18</name>
</gene>
<accession>O42043</accession>
<accession>O95280</accession>
<accession>Q96PI3</accession>
<accession>Q96PI6</accession>
<accession>Q9QC06</accession>
<evidence type="ECO:0000250" key="1"/>
<evidence type="ECO:0000255" key="2"/>
<evidence type="ECO:0000269" key="3">
    <source>
    </source>
</evidence>
<evidence type="ECO:0000269" key="4">
    <source>
    </source>
</evidence>
<evidence type="ECO:0000269" key="5">
    <source>
    </source>
</evidence>
<evidence type="ECO:0000269" key="6">
    <source>
    </source>
</evidence>
<evidence type="ECO:0000269" key="7">
    <source>
    </source>
</evidence>
<evidence type="ECO:0000269" key="8">
    <source>
    </source>
</evidence>
<evidence type="ECO:0000269" key="9">
    <source>
    </source>
</evidence>
<evidence type="ECO:0000305" key="10"/>
<sequence length="560" mass="63671">MVTPVTWMDNPIEVYVNDSVWVPGPTDDRCPAKPEEEGMMINISIGYHYPPICLGRAPGCLMPAVQNWLVEVPTVSPNSRFTYHMVSGMSLRPRVNCLQDFSYQRSLKFRPKGKTCPKEIPKGSKNTEVLVWEECVANSVVILQNNEFGTIIDWAPRGQFYHNCSGQTQSCPSAQVSPAVDSDLTESLDKHKHKKLQSFYLWEWEEKGISTPRPKIISPVSGPEHPELWRLTVASHHIRIWSGNQTLETRYRKPFYTIDLNSILTVPLQSCVKPPYMLVVGNIVIKPASQTITCENCRLFTCIDSTFNWQHRILLVRAREGMWIPVSTDRPWEASPSIHILTEILKGVLNRSKRFIFTLIAVIMGLIAVTATAAVAGVALHSSVQSVNFVNYWQKNSTRLWNSQSSIDQKLASQINDLRQTVIWMGDRLMTLEHHFQLQCDWNTSDFCITPQIYNESEHHWDMVRRHLQGREDNLTLDISKLKEQIFEASKAHLNLVPGTEAIAGVADGLANLNPVTWIKTIRSTMIINLILIVVCLFCLLLVCRCTQQLRRDSDIENGP</sequence>
<keyword id="KW-1003">Cell membrane</keyword>
<keyword id="KW-0165">Cleavage on pair of basic residues</keyword>
<keyword id="KW-1015">Disulfide bond</keyword>
<keyword id="KW-0895">ERV</keyword>
<keyword id="KW-0472">Membrane</keyword>
<keyword id="KW-1185">Reference proteome</keyword>
<keyword id="KW-0812">Transmembrane</keyword>
<keyword id="KW-1133">Transmembrane helix</keyword>
<keyword id="KW-0814">Transposable element</keyword>
<keyword id="KW-0261">Viral envelope protein</keyword>
<keyword id="KW-0946">Virion</keyword>
<name>ENK18_HUMAN</name>